<feature type="chain" id="PRO_1000148581" description="2,3,4,5-tetrahydropyridine-2,6-dicarboxylate N-succinyltransferase">
    <location>
        <begin position="1"/>
        <end position="285"/>
    </location>
</feature>
<feature type="binding site" evidence="1">
    <location>
        <position position="111"/>
    </location>
    <ligand>
        <name>substrate</name>
    </ligand>
</feature>
<feature type="binding site" evidence="1">
    <location>
        <position position="148"/>
    </location>
    <ligand>
        <name>substrate</name>
    </ligand>
</feature>
<reference key="1">
    <citation type="journal article" date="2009" name="J. Bacteriol.">
        <title>Genome sequences of three Agrobacterium biovars help elucidate the evolution of multichromosome genomes in bacteria.</title>
        <authorList>
            <person name="Slater S.C."/>
            <person name="Goldman B.S."/>
            <person name="Goodner B."/>
            <person name="Setubal J.C."/>
            <person name="Farrand S.K."/>
            <person name="Nester E.W."/>
            <person name="Burr T.J."/>
            <person name="Banta L."/>
            <person name="Dickerman A.W."/>
            <person name="Paulsen I."/>
            <person name="Otten L."/>
            <person name="Suen G."/>
            <person name="Welch R."/>
            <person name="Almeida N.F."/>
            <person name="Arnold F."/>
            <person name="Burton O.T."/>
            <person name="Du Z."/>
            <person name="Ewing A."/>
            <person name="Godsy E."/>
            <person name="Heisel S."/>
            <person name="Houmiel K.L."/>
            <person name="Jhaveri J."/>
            <person name="Lu J."/>
            <person name="Miller N.M."/>
            <person name="Norton S."/>
            <person name="Chen Q."/>
            <person name="Phoolcharoen W."/>
            <person name="Ohlin V."/>
            <person name="Ondrusek D."/>
            <person name="Pride N."/>
            <person name="Stricklin S.L."/>
            <person name="Sun J."/>
            <person name="Wheeler C."/>
            <person name="Wilson L."/>
            <person name="Zhu H."/>
            <person name="Wood D.W."/>
        </authorList>
    </citation>
    <scope>NUCLEOTIDE SEQUENCE [LARGE SCALE GENOMIC DNA]</scope>
    <source>
        <strain>ATCC BAA-846 / DSM 112012 / S4</strain>
    </source>
</reference>
<organism>
    <name type="scientific">Allorhizobium ampelinum (strain ATCC BAA-846 / DSM 112012 / S4)</name>
    <name type="common">Agrobacterium vitis (strain S4)</name>
    <dbReference type="NCBI Taxonomy" id="311402"/>
    <lineage>
        <taxon>Bacteria</taxon>
        <taxon>Pseudomonadati</taxon>
        <taxon>Pseudomonadota</taxon>
        <taxon>Alphaproteobacteria</taxon>
        <taxon>Hyphomicrobiales</taxon>
        <taxon>Rhizobiaceae</taxon>
        <taxon>Rhizobium/Agrobacterium group</taxon>
        <taxon>Allorhizobium</taxon>
        <taxon>Allorhizobium ampelinum</taxon>
    </lineage>
</organism>
<dbReference type="EC" id="2.3.1.117" evidence="1"/>
<dbReference type="EMBL" id="CP000633">
    <property type="protein sequence ID" value="ACM35330.1"/>
    <property type="molecule type" value="Genomic_DNA"/>
</dbReference>
<dbReference type="RefSeq" id="WP_015914758.1">
    <property type="nucleotide sequence ID" value="NC_011989.1"/>
</dbReference>
<dbReference type="SMR" id="B9JZL8"/>
<dbReference type="STRING" id="311402.Avi_0473"/>
<dbReference type="KEGG" id="avi:Avi_0473"/>
<dbReference type="eggNOG" id="COG2171">
    <property type="taxonomic scope" value="Bacteria"/>
</dbReference>
<dbReference type="HOGENOM" id="CLU_050859_0_1_5"/>
<dbReference type="UniPathway" id="UPA00034">
    <property type="reaction ID" value="UER00019"/>
</dbReference>
<dbReference type="Proteomes" id="UP000001596">
    <property type="component" value="Chromosome 1"/>
</dbReference>
<dbReference type="GO" id="GO:0005737">
    <property type="term" value="C:cytoplasm"/>
    <property type="evidence" value="ECO:0007669"/>
    <property type="project" value="UniProtKB-SubCell"/>
</dbReference>
<dbReference type="GO" id="GO:0008666">
    <property type="term" value="F:2,3,4,5-tetrahydropyridine-2,6-dicarboxylate N-succinyltransferase activity"/>
    <property type="evidence" value="ECO:0007669"/>
    <property type="project" value="UniProtKB-UniRule"/>
</dbReference>
<dbReference type="GO" id="GO:0019877">
    <property type="term" value="P:diaminopimelate biosynthetic process"/>
    <property type="evidence" value="ECO:0007669"/>
    <property type="project" value="UniProtKB-UniRule"/>
</dbReference>
<dbReference type="GO" id="GO:0009089">
    <property type="term" value="P:lysine biosynthetic process via diaminopimelate"/>
    <property type="evidence" value="ECO:0007669"/>
    <property type="project" value="UniProtKB-UniRule"/>
</dbReference>
<dbReference type="CDD" id="cd03350">
    <property type="entry name" value="LbH_THP_succinylT"/>
    <property type="match status" value="1"/>
</dbReference>
<dbReference type="Gene3D" id="2.160.10.10">
    <property type="entry name" value="Hexapeptide repeat proteins"/>
    <property type="match status" value="1"/>
</dbReference>
<dbReference type="Gene3D" id="1.10.166.10">
    <property type="entry name" value="Tetrahydrodipicolinate-N-succinyltransferase, N-terminal domain"/>
    <property type="match status" value="1"/>
</dbReference>
<dbReference type="HAMAP" id="MF_00811">
    <property type="entry name" value="DapD"/>
    <property type="match status" value="1"/>
</dbReference>
<dbReference type="InterPro" id="IPR005664">
    <property type="entry name" value="DapD_Trfase_Hexpep_rpt_fam"/>
</dbReference>
<dbReference type="InterPro" id="IPR001451">
    <property type="entry name" value="Hexapep"/>
</dbReference>
<dbReference type="InterPro" id="IPR018357">
    <property type="entry name" value="Hexapep_transf_CS"/>
</dbReference>
<dbReference type="InterPro" id="IPR023180">
    <property type="entry name" value="THP_succinylTrfase_dom1"/>
</dbReference>
<dbReference type="InterPro" id="IPR037133">
    <property type="entry name" value="THP_succinylTrfase_N_sf"/>
</dbReference>
<dbReference type="InterPro" id="IPR050179">
    <property type="entry name" value="Trans_hexapeptide_repeat"/>
</dbReference>
<dbReference type="InterPro" id="IPR011004">
    <property type="entry name" value="Trimer_LpxA-like_sf"/>
</dbReference>
<dbReference type="NCBIfam" id="TIGR00965">
    <property type="entry name" value="dapD"/>
    <property type="match status" value="1"/>
</dbReference>
<dbReference type="NCBIfam" id="NF008808">
    <property type="entry name" value="PRK11830.1"/>
    <property type="match status" value="1"/>
</dbReference>
<dbReference type="PANTHER" id="PTHR43300:SF10">
    <property type="entry name" value="2,3,4,5-TETRAHYDROPYRIDINE-2,6-DICARBOXYLATE N-ACETYLTRANSFERASE"/>
    <property type="match status" value="1"/>
</dbReference>
<dbReference type="PANTHER" id="PTHR43300">
    <property type="entry name" value="ACETYLTRANSFERASE"/>
    <property type="match status" value="1"/>
</dbReference>
<dbReference type="Pfam" id="PF14602">
    <property type="entry name" value="Hexapep_2"/>
    <property type="match status" value="1"/>
</dbReference>
<dbReference type="Pfam" id="PF14805">
    <property type="entry name" value="THDPS_N_2"/>
    <property type="match status" value="1"/>
</dbReference>
<dbReference type="SUPFAM" id="SSF51161">
    <property type="entry name" value="Trimeric LpxA-like enzymes"/>
    <property type="match status" value="1"/>
</dbReference>
<dbReference type="PROSITE" id="PS00101">
    <property type="entry name" value="HEXAPEP_TRANSFERASES"/>
    <property type="match status" value="1"/>
</dbReference>
<sequence length="285" mass="30465">MSAMDLSSLQTVIDTAFDNRDTITLSTKGEVRDAVEQSLALLDQGKVRVATRGEDGQWTVHQWLKKAVLLSFRLNDMEVVKGGPGASTWWDKVPSKFEGWGENQFRAAGFRAVPNAVVRHSAFIAPNAILMPSFVNLGAYVGEGTMVDTWATVGSCAQIGRHVHLSGGVGIGGVLEPMQAGPTIIEDNCFIGARSEVVEGCIIREGAVLGMGVYIGKSTKIIDRATGEVMYGEVPPYSVVVAGSMPSPNTMPNGLPAPSLYCAVIVKRVDAQTRSKTGINELLRD</sequence>
<keyword id="KW-0012">Acyltransferase</keyword>
<keyword id="KW-0028">Amino-acid biosynthesis</keyword>
<keyword id="KW-0963">Cytoplasm</keyword>
<keyword id="KW-0220">Diaminopimelate biosynthesis</keyword>
<keyword id="KW-0457">Lysine biosynthesis</keyword>
<keyword id="KW-1185">Reference proteome</keyword>
<keyword id="KW-0677">Repeat</keyword>
<keyword id="KW-0808">Transferase</keyword>
<name>DAPD_ALLAM</name>
<protein>
    <recommendedName>
        <fullName evidence="1">2,3,4,5-tetrahydropyridine-2,6-dicarboxylate N-succinyltransferase</fullName>
        <ecNumber evidence="1">2.3.1.117</ecNumber>
    </recommendedName>
    <alternativeName>
        <fullName evidence="1">Tetrahydrodipicolinate N-succinyltransferase</fullName>
        <shortName evidence="1">THDP succinyltransferase</shortName>
        <shortName evidence="1">THP succinyltransferase</shortName>
        <shortName evidence="1">Tetrahydropicolinate succinylase</shortName>
    </alternativeName>
</protein>
<evidence type="ECO:0000255" key="1">
    <source>
        <dbReference type="HAMAP-Rule" id="MF_00811"/>
    </source>
</evidence>
<accession>B9JZL8</accession>
<proteinExistence type="inferred from homology"/>
<gene>
    <name evidence="1" type="primary">dapD</name>
    <name type="ordered locus">Avi_0473</name>
</gene>
<comment type="catalytic activity">
    <reaction evidence="1">
        <text>(S)-2,3,4,5-tetrahydrodipicolinate + succinyl-CoA + H2O = (S)-2-succinylamino-6-oxoheptanedioate + CoA</text>
        <dbReference type="Rhea" id="RHEA:17325"/>
        <dbReference type="ChEBI" id="CHEBI:15377"/>
        <dbReference type="ChEBI" id="CHEBI:15685"/>
        <dbReference type="ChEBI" id="CHEBI:16845"/>
        <dbReference type="ChEBI" id="CHEBI:57287"/>
        <dbReference type="ChEBI" id="CHEBI:57292"/>
        <dbReference type="EC" id="2.3.1.117"/>
    </reaction>
</comment>
<comment type="pathway">
    <text evidence="1">Amino-acid biosynthesis; L-lysine biosynthesis via DAP pathway; LL-2,6-diaminopimelate from (S)-tetrahydrodipicolinate (succinylase route): step 1/3.</text>
</comment>
<comment type="subunit">
    <text evidence="1">Homotrimer.</text>
</comment>
<comment type="subcellular location">
    <subcellularLocation>
        <location evidence="1">Cytoplasm</location>
    </subcellularLocation>
</comment>
<comment type="similarity">
    <text evidence="1">Belongs to the transferase hexapeptide repeat family.</text>
</comment>